<accession>Q9Y7Z5</accession>
<name>TTS1_SCHPO</name>
<comment type="function">
    <text evidence="3">Required for the correct positioning of the cellular division plane by delimiting the actomyosin ring assembly at the cell equator.</text>
</comment>
<comment type="subunit">
    <text evidence="3">Interacts with RTN1 and YOP1.</text>
</comment>
<comment type="subcellular location">
    <subcellularLocation>
        <location>Golgi apparatus membrane</location>
        <topology>Multi-pass membrane protein</topology>
    </subcellularLocation>
    <subcellularLocation>
        <location>Endoplasmic reticulum membrane</location>
        <topology>Multi-pass membrane protein</topology>
    </subcellularLocation>
    <subcellularLocation>
        <location>Nucleus membrane</location>
        <topology>Multi-pass membrane protein</topology>
    </subcellularLocation>
    <text>Enriched at the cell equator during mitosis.</text>
</comment>
<comment type="similarity">
    <text evidence="4">Belongs to the PER33/POM33 family.</text>
</comment>
<dbReference type="EMBL" id="CU329671">
    <property type="protein sequence ID" value="CAB51336.1"/>
    <property type="molecule type" value="Genomic_DNA"/>
</dbReference>
<dbReference type="PIR" id="T39463">
    <property type="entry name" value="T39463"/>
</dbReference>
<dbReference type="RefSeq" id="NP_596818.1">
    <property type="nucleotide sequence ID" value="NM_001023838.2"/>
</dbReference>
<dbReference type="BioGRID" id="276467">
    <property type="interactions" value="7"/>
</dbReference>
<dbReference type="FunCoup" id="Q9Y7Z5">
    <property type="interactions" value="206"/>
</dbReference>
<dbReference type="STRING" id="284812.Q9Y7Z5"/>
<dbReference type="TCDB" id="8.A.124.1.1">
    <property type="family name" value="the tetra spanning protein 1 (tts1) family"/>
</dbReference>
<dbReference type="GlyCosmos" id="Q9Y7Z5">
    <property type="glycosylation" value="2 sites, No reported glycans"/>
</dbReference>
<dbReference type="iPTMnet" id="Q9Y7Z5"/>
<dbReference type="PaxDb" id="4896-SPBC1539.04.1"/>
<dbReference type="EnsemblFungi" id="SPBC1539.04.1">
    <property type="protein sequence ID" value="SPBC1539.04.1:pep"/>
    <property type="gene ID" value="SPBC1539.04"/>
</dbReference>
<dbReference type="GeneID" id="2539923"/>
<dbReference type="KEGG" id="spo:2539923"/>
<dbReference type="PomBase" id="SPBC1539.04">
    <property type="gene designation" value="tts1"/>
</dbReference>
<dbReference type="VEuPathDB" id="FungiDB:SPBC1539.04"/>
<dbReference type="eggNOG" id="KOG4002">
    <property type="taxonomic scope" value="Eukaryota"/>
</dbReference>
<dbReference type="HOGENOM" id="CLU_065417_0_0_1"/>
<dbReference type="InParanoid" id="Q9Y7Z5"/>
<dbReference type="OMA" id="NVQYLIM"/>
<dbReference type="PhylomeDB" id="Q9Y7Z5"/>
<dbReference type="PRO" id="PR:Q9Y7Z5"/>
<dbReference type="Proteomes" id="UP000002485">
    <property type="component" value="Chromosome II"/>
</dbReference>
<dbReference type="GO" id="GO:0032153">
    <property type="term" value="C:cell division site"/>
    <property type="evidence" value="ECO:0000314"/>
    <property type="project" value="PomBase"/>
</dbReference>
<dbReference type="GO" id="GO:0032541">
    <property type="term" value="C:cortical endoplasmic reticulum"/>
    <property type="evidence" value="ECO:0000314"/>
    <property type="project" value="PomBase"/>
</dbReference>
<dbReference type="GO" id="GO:0005783">
    <property type="term" value="C:endoplasmic reticulum"/>
    <property type="evidence" value="ECO:0007005"/>
    <property type="project" value="PomBase"/>
</dbReference>
<dbReference type="GO" id="GO:0005789">
    <property type="term" value="C:endoplasmic reticulum membrane"/>
    <property type="evidence" value="ECO:0007669"/>
    <property type="project" value="UniProtKB-SubCell"/>
</dbReference>
<dbReference type="GO" id="GO:0071782">
    <property type="term" value="C:endoplasmic reticulum tubular network"/>
    <property type="evidence" value="ECO:0000314"/>
    <property type="project" value="PomBase"/>
</dbReference>
<dbReference type="GO" id="GO:0005794">
    <property type="term" value="C:Golgi apparatus"/>
    <property type="evidence" value="ECO:0007005"/>
    <property type="project" value="PomBase"/>
</dbReference>
<dbReference type="GO" id="GO:0000139">
    <property type="term" value="C:Golgi membrane"/>
    <property type="evidence" value="ECO:0007669"/>
    <property type="project" value="UniProtKB-SubCell"/>
</dbReference>
<dbReference type="GO" id="GO:0005635">
    <property type="term" value="C:nuclear envelope"/>
    <property type="evidence" value="ECO:0000314"/>
    <property type="project" value="PomBase"/>
</dbReference>
<dbReference type="GO" id="GO:0031965">
    <property type="term" value="C:nuclear membrane"/>
    <property type="evidence" value="ECO:0000314"/>
    <property type="project" value="PomBase"/>
</dbReference>
<dbReference type="GO" id="GO:0005643">
    <property type="term" value="C:nuclear pore"/>
    <property type="evidence" value="ECO:0000314"/>
    <property type="project" value="PomBase"/>
</dbReference>
<dbReference type="GO" id="GO:0051301">
    <property type="term" value="P:cell division"/>
    <property type="evidence" value="ECO:0007669"/>
    <property type="project" value="UniProtKB-KW"/>
</dbReference>
<dbReference type="GO" id="GO:1990809">
    <property type="term" value="P:endoplasmic reticulum tubular network membrane organization"/>
    <property type="evidence" value="ECO:0000315"/>
    <property type="project" value="PomBase"/>
</dbReference>
<dbReference type="GO" id="GO:0071786">
    <property type="term" value="P:endoplasmic reticulum tubular network organization"/>
    <property type="evidence" value="ECO:0000318"/>
    <property type="project" value="GO_Central"/>
</dbReference>
<dbReference type="GO" id="GO:0061024">
    <property type="term" value="P:membrane organization"/>
    <property type="evidence" value="ECO:0000318"/>
    <property type="project" value="GO_Central"/>
</dbReference>
<dbReference type="GO" id="GO:0140480">
    <property type="term" value="P:mitotic spindle pole body insertion into the nuclear envelope"/>
    <property type="evidence" value="ECO:0000316"/>
    <property type="project" value="PomBase"/>
</dbReference>
<dbReference type="GO" id="GO:1990608">
    <property type="term" value="P:mitotic spindle pole body localization"/>
    <property type="evidence" value="ECO:0000316"/>
    <property type="project" value="PomBase"/>
</dbReference>
<dbReference type="GO" id="GO:0071763">
    <property type="term" value="P:nuclear membrane organization"/>
    <property type="evidence" value="ECO:0000315"/>
    <property type="project" value="PomBase"/>
</dbReference>
<dbReference type="InterPro" id="IPR051645">
    <property type="entry name" value="PER33/POM33_regulator"/>
</dbReference>
<dbReference type="InterPro" id="IPR005344">
    <property type="entry name" value="TMEM33/Pom33"/>
</dbReference>
<dbReference type="PANTHER" id="PTHR12703">
    <property type="entry name" value="TRANSMEMBRANE PROTEIN 33"/>
    <property type="match status" value="1"/>
</dbReference>
<dbReference type="PANTHER" id="PTHR12703:SF4">
    <property type="entry name" value="TRANSMEMBRANE PROTEIN 33"/>
    <property type="match status" value="1"/>
</dbReference>
<dbReference type="Pfam" id="PF03661">
    <property type="entry name" value="TMEM33_Pom33"/>
    <property type="match status" value="1"/>
</dbReference>
<feature type="chain" id="PRO_0000351445" description="Tetra-spanning protein 1">
    <location>
        <begin position="1"/>
        <end position="279"/>
    </location>
</feature>
<feature type="transmembrane region" description="Helical" evidence="1">
    <location>
        <begin position="25"/>
        <end position="45"/>
    </location>
</feature>
<feature type="transmembrane region" description="Helical" evidence="1">
    <location>
        <begin position="50"/>
        <end position="70"/>
    </location>
</feature>
<feature type="transmembrane region" description="Helical" evidence="1">
    <location>
        <begin position="100"/>
        <end position="122"/>
    </location>
</feature>
<feature type="transmembrane region" description="Helical" evidence="1">
    <location>
        <begin position="172"/>
        <end position="192"/>
    </location>
</feature>
<feature type="region of interest" description="Disordered" evidence="2">
    <location>
        <begin position="260"/>
        <end position="279"/>
    </location>
</feature>
<feature type="compositionally biased region" description="Low complexity" evidence="2">
    <location>
        <begin position="262"/>
        <end position="279"/>
    </location>
</feature>
<feature type="glycosylation site" description="N-linked (GlcNAc...) asparagine" evidence="1">
    <location>
        <position position="77"/>
    </location>
</feature>
<feature type="glycosylation site" description="N-linked (GlcNAc...) asparagine" evidence="1">
    <location>
        <position position="143"/>
    </location>
</feature>
<evidence type="ECO:0000255" key="1"/>
<evidence type="ECO:0000256" key="2">
    <source>
        <dbReference type="SAM" id="MobiDB-lite"/>
    </source>
</evidence>
<evidence type="ECO:0000269" key="3">
    <source>
    </source>
</evidence>
<evidence type="ECO:0000305" key="4"/>
<keyword id="KW-0131">Cell cycle</keyword>
<keyword id="KW-0132">Cell division</keyword>
<keyword id="KW-0256">Endoplasmic reticulum</keyword>
<keyword id="KW-0325">Glycoprotein</keyword>
<keyword id="KW-0333">Golgi apparatus</keyword>
<keyword id="KW-0472">Membrane</keyword>
<keyword id="KW-0539">Nucleus</keyword>
<keyword id="KW-1185">Reference proteome</keyword>
<keyword id="KW-0812">Transmembrane</keyword>
<keyword id="KW-1133">Transmembrane helix</keyword>
<organism>
    <name type="scientific">Schizosaccharomyces pombe (strain 972 / ATCC 24843)</name>
    <name type="common">Fission yeast</name>
    <dbReference type="NCBI Taxonomy" id="284812"/>
    <lineage>
        <taxon>Eukaryota</taxon>
        <taxon>Fungi</taxon>
        <taxon>Dikarya</taxon>
        <taxon>Ascomycota</taxon>
        <taxon>Taphrinomycotina</taxon>
        <taxon>Schizosaccharomycetes</taxon>
        <taxon>Schizosaccharomycetales</taxon>
        <taxon>Schizosaccharomycetaceae</taxon>
        <taxon>Schizosaccharomyces</taxon>
    </lineage>
</organism>
<protein>
    <recommendedName>
        <fullName>Tetra-spanning protein 1</fullName>
    </recommendedName>
</protein>
<gene>
    <name type="primary">tts1</name>
    <name type="ORF">SPBC1539.04</name>
</gene>
<reference key="1">
    <citation type="journal article" date="2002" name="Nature">
        <title>The genome sequence of Schizosaccharomyces pombe.</title>
        <authorList>
            <person name="Wood V."/>
            <person name="Gwilliam R."/>
            <person name="Rajandream M.A."/>
            <person name="Lyne M.H."/>
            <person name="Lyne R."/>
            <person name="Stewart A."/>
            <person name="Sgouros J.G."/>
            <person name="Peat N."/>
            <person name="Hayles J."/>
            <person name="Baker S.G."/>
            <person name="Basham D."/>
            <person name="Bowman S."/>
            <person name="Brooks K."/>
            <person name="Brown D."/>
            <person name="Brown S."/>
            <person name="Chillingworth T."/>
            <person name="Churcher C.M."/>
            <person name="Collins M."/>
            <person name="Connor R."/>
            <person name="Cronin A."/>
            <person name="Davis P."/>
            <person name="Feltwell T."/>
            <person name="Fraser A."/>
            <person name="Gentles S."/>
            <person name="Goble A."/>
            <person name="Hamlin N."/>
            <person name="Harris D.E."/>
            <person name="Hidalgo J."/>
            <person name="Hodgson G."/>
            <person name="Holroyd S."/>
            <person name="Hornsby T."/>
            <person name="Howarth S."/>
            <person name="Huckle E.J."/>
            <person name="Hunt S."/>
            <person name="Jagels K."/>
            <person name="James K.D."/>
            <person name="Jones L."/>
            <person name="Jones M."/>
            <person name="Leather S."/>
            <person name="McDonald S."/>
            <person name="McLean J."/>
            <person name="Mooney P."/>
            <person name="Moule S."/>
            <person name="Mungall K.L."/>
            <person name="Murphy L.D."/>
            <person name="Niblett D."/>
            <person name="Odell C."/>
            <person name="Oliver K."/>
            <person name="O'Neil S."/>
            <person name="Pearson D."/>
            <person name="Quail M.A."/>
            <person name="Rabbinowitsch E."/>
            <person name="Rutherford K.M."/>
            <person name="Rutter S."/>
            <person name="Saunders D."/>
            <person name="Seeger K."/>
            <person name="Sharp S."/>
            <person name="Skelton J."/>
            <person name="Simmonds M.N."/>
            <person name="Squares R."/>
            <person name="Squares S."/>
            <person name="Stevens K."/>
            <person name="Taylor K."/>
            <person name="Taylor R.G."/>
            <person name="Tivey A."/>
            <person name="Walsh S.V."/>
            <person name="Warren T."/>
            <person name="Whitehead S."/>
            <person name="Woodward J.R."/>
            <person name="Volckaert G."/>
            <person name="Aert R."/>
            <person name="Robben J."/>
            <person name="Grymonprez B."/>
            <person name="Weltjens I."/>
            <person name="Vanstreels E."/>
            <person name="Rieger M."/>
            <person name="Schaefer M."/>
            <person name="Mueller-Auer S."/>
            <person name="Gabel C."/>
            <person name="Fuchs M."/>
            <person name="Duesterhoeft A."/>
            <person name="Fritzc C."/>
            <person name="Holzer E."/>
            <person name="Moestl D."/>
            <person name="Hilbert H."/>
            <person name="Borzym K."/>
            <person name="Langer I."/>
            <person name="Beck A."/>
            <person name="Lehrach H."/>
            <person name="Reinhardt R."/>
            <person name="Pohl T.M."/>
            <person name="Eger P."/>
            <person name="Zimmermann W."/>
            <person name="Wedler H."/>
            <person name="Wambutt R."/>
            <person name="Purnelle B."/>
            <person name="Goffeau A."/>
            <person name="Cadieu E."/>
            <person name="Dreano S."/>
            <person name="Gloux S."/>
            <person name="Lelaure V."/>
            <person name="Mottier S."/>
            <person name="Galibert F."/>
            <person name="Aves S.J."/>
            <person name="Xiang Z."/>
            <person name="Hunt C."/>
            <person name="Moore K."/>
            <person name="Hurst S.M."/>
            <person name="Lucas M."/>
            <person name="Rochet M."/>
            <person name="Gaillardin C."/>
            <person name="Tallada V.A."/>
            <person name="Garzon A."/>
            <person name="Thode G."/>
            <person name="Daga R.R."/>
            <person name="Cruzado L."/>
            <person name="Jimenez J."/>
            <person name="Sanchez M."/>
            <person name="del Rey F."/>
            <person name="Benito J."/>
            <person name="Dominguez A."/>
            <person name="Revuelta J.L."/>
            <person name="Moreno S."/>
            <person name="Armstrong J."/>
            <person name="Forsburg S.L."/>
            <person name="Cerutti L."/>
            <person name="Lowe T."/>
            <person name="McCombie W.R."/>
            <person name="Paulsen I."/>
            <person name="Potashkin J."/>
            <person name="Shpakovski G.V."/>
            <person name="Ussery D."/>
            <person name="Barrell B.G."/>
            <person name="Nurse P."/>
        </authorList>
    </citation>
    <scope>NUCLEOTIDE SEQUENCE [LARGE SCALE GENOMIC DNA]</scope>
    <source>
        <strain>972 / ATCC 24843</strain>
    </source>
</reference>
<reference key="2">
    <citation type="journal article" date="2006" name="Nat. Biotechnol.">
        <title>ORFeome cloning and global analysis of protein localization in the fission yeast Schizosaccharomyces pombe.</title>
        <authorList>
            <person name="Matsuyama A."/>
            <person name="Arai R."/>
            <person name="Yashiroda Y."/>
            <person name="Shirai A."/>
            <person name="Kamata A."/>
            <person name="Sekido S."/>
            <person name="Kobayashi Y."/>
            <person name="Hashimoto A."/>
            <person name="Hamamoto M."/>
            <person name="Hiraoka Y."/>
            <person name="Horinouchi S."/>
            <person name="Yoshida M."/>
        </authorList>
    </citation>
    <scope>SUBCELLULAR LOCATION [LARGE SCALE ANALYSIS]</scope>
</reference>
<reference key="3">
    <citation type="journal article" date="2010" name="Curr. Biol.">
        <title>The cortical ER network limits the permissive zone for actomyosin ring assembly.</title>
        <authorList>
            <person name="Zhang D."/>
            <person name="Vjestica A."/>
            <person name="Oliferenko S."/>
        </authorList>
    </citation>
    <scope>SUBCELLULAR LOCATION</scope>
    <scope>INTERACTION WITH RTN1 AND YOP1</scope>
    <scope>FUNCTION</scope>
</reference>
<proteinExistence type="evidence at protein level"/>
<sequence length="279" mass="31570">MEPKQRVVKPLKERVLPVVKNTQFVWFSGQVIVLISSVLYALQAIPFRSAPPFLFKSAAFGAIVAYAIVLYKTYSPNLTSRASWNKHFFARLMLDDNVQYFILALSMLIDRPILFSLAPYAIYATFHISTYLRSVLLPAIYPNISDAKTASYASRVSNLLNQYTRSQFQPAMQLVASLETFLLFRLFFGVFLRKNSISRLVGYIFFLRMRYTNSHFTRASIKAVSLRMDRLVADNRVPPVIKNAWHTFKTYVSKFGASPVGTAQSRPTASSSTTAPSST</sequence>